<sequence>MAVLTDDQVDAALPELGGWERADGALRRSVKFPAFLDGIEAVRRVAERAEAKDHHPDIDIRWRTVTFVLVTHSEGGITEKDLQMAREIDEILDR</sequence>
<feature type="chain" id="PRO_1000050425" description="Putative pterin-4-alpha-carbinolamine dehydratase">
    <location>
        <begin position="1"/>
        <end position="94"/>
    </location>
</feature>
<evidence type="ECO:0000255" key="1">
    <source>
        <dbReference type="HAMAP-Rule" id="MF_00434"/>
    </source>
</evidence>
<protein>
    <recommendedName>
        <fullName evidence="1">Putative pterin-4-alpha-carbinolamine dehydratase</fullName>
        <shortName evidence="1">PHS</shortName>
        <ecNumber evidence="1">4.2.1.96</ecNumber>
    </recommendedName>
    <alternativeName>
        <fullName evidence="1">4-alpha-hydroxy-tetrahydropterin dehydratase</fullName>
    </alternativeName>
    <alternativeName>
        <fullName evidence="1">Pterin carbinolamine dehydratase</fullName>
        <shortName evidence="1">PCD</shortName>
    </alternativeName>
</protein>
<dbReference type="EC" id="4.2.1.96" evidence="1"/>
<dbReference type="EMBL" id="CP000384">
    <property type="protein sequence ID" value="ABG10149.1"/>
    <property type="molecule type" value="Genomic_DNA"/>
</dbReference>
<dbReference type="SMR" id="Q1B4N5"/>
<dbReference type="KEGG" id="mmc:Mmcs_4044"/>
<dbReference type="HOGENOM" id="CLU_081974_4_3_11"/>
<dbReference type="BioCyc" id="MSP164756:G1G6O-4129-MONOMER"/>
<dbReference type="GO" id="GO:0008124">
    <property type="term" value="F:4-alpha-hydroxytetrahydrobiopterin dehydratase activity"/>
    <property type="evidence" value="ECO:0007669"/>
    <property type="project" value="UniProtKB-UniRule"/>
</dbReference>
<dbReference type="GO" id="GO:0006729">
    <property type="term" value="P:tetrahydrobiopterin biosynthetic process"/>
    <property type="evidence" value="ECO:0007669"/>
    <property type="project" value="InterPro"/>
</dbReference>
<dbReference type="CDD" id="cd00488">
    <property type="entry name" value="PCD_DCoH"/>
    <property type="match status" value="1"/>
</dbReference>
<dbReference type="Gene3D" id="3.30.1360.20">
    <property type="entry name" value="Transcriptional coactivator/pterin dehydratase"/>
    <property type="match status" value="1"/>
</dbReference>
<dbReference type="HAMAP" id="MF_00434">
    <property type="entry name" value="Pterin_4_alpha"/>
    <property type="match status" value="1"/>
</dbReference>
<dbReference type="InterPro" id="IPR036428">
    <property type="entry name" value="PCD_sf"/>
</dbReference>
<dbReference type="InterPro" id="IPR001533">
    <property type="entry name" value="Pterin_deHydtase"/>
</dbReference>
<dbReference type="NCBIfam" id="NF002017">
    <property type="entry name" value="PRK00823.1-2"/>
    <property type="match status" value="1"/>
</dbReference>
<dbReference type="PANTHER" id="PTHR12599">
    <property type="entry name" value="PTERIN-4-ALPHA-CARBINOLAMINE DEHYDRATASE"/>
    <property type="match status" value="1"/>
</dbReference>
<dbReference type="PANTHER" id="PTHR12599:SF0">
    <property type="entry name" value="PTERIN-4-ALPHA-CARBINOLAMINE DEHYDRATASE"/>
    <property type="match status" value="1"/>
</dbReference>
<dbReference type="Pfam" id="PF01329">
    <property type="entry name" value="Pterin_4a"/>
    <property type="match status" value="1"/>
</dbReference>
<dbReference type="SUPFAM" id="SSF55248">
    <property type="entry name" value="PCD-like"/>
    <property type="match status" value="1"/>
</dbReference>
<comment type="catalytic activity">
    <reaction evidence="1">
        <text>(4aS,6R)-4a-hydroxy-L-erythro-5,6,7,8-tetrahydrobiopterin = (6R)-L-erythro-6,7-dihydrobiopterin + H2O</text>
        <dbReference type="Rhea" id="RHEA:11920"/>
        <dbReference type="ChEBI" id="CHEBI:15377"/>
        <dbReference type="ChEBI" id="CHEBI:15642"/>
        <dbReference type="ChEBI" id="CHEBI:43120"/>
        <dbReference type="EC" id="4.2.1.96"/>
    </reaction>
</comment>
<comment type="similarity">
    <text evidence="1">Belongs to the pterin-4-alpha-carbinolamine dehydratase family.</text>
</comment>
<reference key="1">
    <citation type="submission" date="2006-06" db="EMBL/GenBank/DDBJ databases">
        <title>Complete sequence of chromosome of Mycobacterium sp. MCS.</title>
        <authorList>
            <consortium name="US DOE Joint Genome Institute"/>
            <person name="Copeland A."/>
            <person name="Lucas S."/>
            <person name="Lapidus A."/>
            <person name="Barry K."/>
            <person name="Detter J.C."/>
            <person name="Glavina del Rio T."/>
            <person name="Hammon N."/>
            <person name="Israni S."/>
            <person name="Dalin E."/>
            <person name="Tice H."/>
            <person name="Pitluck S."/>
            <person name="Martinez M."/>
            <person name="Schmutz J."/>
            <person name="Larimer F."/>
            <person name="Land M."/>
            <person name="Hauser L."/>
            <person name="Kyrpides N."/>
            <person name="Kim E."/>
            <person name="Miller C.D."/>
            <person name="Hughes J.E."/>
            <person name="Anderson A.J."/>
            <person name="Sims R.C."/>
            <person name="Richardson P."/>
        </authorList>
    </citation>
    <scope>NUCLEOTIDE SEQUENCE [LARGE SCALE GENOMIC DNA]</scope>
    <source>
        <strain>MCS</strain>
    </source>
</reference>
<organism>
    <name type="scientific">Mycobacterium sp. (strain MCS)</name>
    <dbReference type="NCBI Taxonomy" id="164756"/>
    <lineage>
        <taxon>Bacteria</taxon>
        <taxon>Bacillati</taxon>
        <taxon>Actinomycetota</taxon>
        <taxon>Actinomycetes</taxon>
        <taxon>Mycobacteriales</taxon>
        <taxon>Mycobacteriaceae</taxon>
        <taxon>Mycobacterium</taxon>
    </lineage>
</organism>
<gene>
    <name type="ordered locus">Mmcs_4044</name>
</gene>
<proteinExistence type="inferred from homology"/>
<keyword id="KW-0456">Lyase</keyword>
<name>PHS_MYCSS</name>
<accession>Q1B4N5</accession>